<evidence type="ECO:0000255" key="1">
    <source>
        <dbReference type="HAMAP-Rule" id="MF_01322"/>
    </source>
</evidence>
<sequence>MKDLLKFLKQQNKTEEFDAIRIGLASPDMVRSWSYGEVKKPETINYRTFKPERDGLFCARIFGPVKDYECLCGKYKRLKHRGVICEKCGVEVTLTKVRRDRMGHIDLASPVAHIWFLKSLPSRIGLMLDMTLRDIERVLYFESFVVTEPGMTTLERGQLLGEEEYLDALEEHGDEFEAKMGAEAVLDLLRELDLAQLIAEMREELPTINSETKRKKITKRLKLMESFHQSGNNPEWMIMTVLPVLPPDLRPLVPLDGGRFATSDLNDLYRRVINRNNRLKRLLDLAAPDIIVRNEKRMLQEAVDALLDNGRRGRAITGSNKRPLKSLADMIKGKQGRFRQNLLGKRVDYSGRSVITVGPTLKLHQCGLPKKMALELFKPFIYGKLERRGMATTIKAAKKMVEREMPEVWDVLDEVIREHPVLLNRAPTLHRLGIQAFEPVLIEGKAIHLHPLVCAAYNADFDGDQMAVHVPLTIEAQLEARALMMSTNNILSPANGEPIIVPSQDVVLGLYYMTRDRINAKGEGAIFKDPKEAEKAYRSGNADLHAIVKVRISQSVKNENGVVEDTITVIDTTVGRAILSLILPKGMPYESINQPLGKKQISGLINECYRRLGLKDTVMFADQIMYTGFHYAMKSGVSIGIDDLVIPPVKAQIIESAEAEVTEINQQFQSGLVTAGEKYNKVIDIWSRVNENLSREMMSNLSKDTVINAQGEEVEQASFNSVFMMADSGARGSAAQIRQLAGMRGLMARPDGSIIETPITANFREGLNVLQYFISTHGARKGLADTALKTANSGYLTRRLVDVAQDLVINEDDCGTEDGLTMKPLIEGGDVVEALRERVLGRVVAEDIVIPGTNTVLVERNIMLDEKLCDLLEEHSVDEVRVRSVITCDNDFGVCANCYGRDLARGHIINAGESVGVIAAQSIGEPGTQLTMRTFHIGGAASRASAENNVQVKTNGTLKLHNAKYVLNTDGKIAIISRSTEITIIDSYGREKERYKVPYGAVLTVQDNAEVQGNDIVATWDPHSHPIVLEHKSKVSFSDIDDSNTETQTDELTGLTRIVVKDLSKANAKEPKLIIESEERGLQETRLPSFTTIEVVDGTTVNPGDVLARIPQEGSKTRDITGGLPRVADLFEARKPKEPAILAEVTGTISFGKETKGKKRLVITPDEGDHYEEMIPKWRQLNVFEGERVSKGEVIADGPESPHDILRLRGVTHVANYIVNEVQEVYRLQGVKINDKHIETIIRQMLRKCTIMHGGDTDFLAGEQIEVARVNIANRDLEAQGKIPAKFEIQLMGITKASLATESFISAASFQETTRVLTDAAVNGKSDELRGLKENVIVGRLIPAGTGFSYHQERMARRKQRNVVEEQTVSAEEATQALTDALNADLSGNQ</sequence>
<reference key="1">
    <citation type="journal article" date="2005" name="Genome Res.">
        <title>Coping with cold: the genome of the versatile marine Antarctica bacterium Pseudoalteromonas haloplanktis TAC125.</title>
        <authorList>
            <person name="Medigue C."/>
            <person name="Krin E."/>
            <person name="Pascal G."/>
            <person name="Barbe V."/>
            <person name="Bernsel A."/>
            <person name="Bertin P.N."/>
            <person name="Cheung F."/>
            <person name="Cruveiller S."/>
            <person name="D'Amico S."/>
            <person name="Duilio A."/>
            <person name="Fang G."/>
            <person name="Feller G."/>
            <person name="Ho C."/>
            <person name="Mangenot S."/>
            <person name="Marino G."/>
            <person name="Nilsson J."/>
            <person name="Parrilli E."/>
            <person name="Rocha E.P.C."/>
            <person name="Rouy Z."/>
            <person name="Sekowska A."/>
            <person name="Tutino M.L."/>
            <person name="Vallenet D."/>
            <person name="von Heijne G."/>
            <person name="Danchin A."/>
        </authorList>
    </citation>
    <scope>NUCLEOTIDE SEQUENCE [LARGE SCALE GENOMIC DNA]</scope>
    <source>
        <strain>TAC 125</strain>
    </source>
</reference>
<dbReference type="EC" id="2.7.7.6" evidence="1"/>
<dbReference type="EMBL" id="CR954246">
    <property type="protein sequence ID" value="CAI85326.1"/>
    <property type="molecule type" value="Genomic_DNA"/>
</dbReference>
<dbReference type="SMR" id="Q3ILP8"/>
<dbReference type="STRING" id="326442.PSHAa0223"/>
<dbReference type="KEGG" id="pha:PSHAa0223"/>
<dbReference type="PATRIC" id="fig|326442.8.peg.214"/>
<dbReference type="eggNOG" id="COG0086">
    <property type="taxonomic scope" value="Bacteria"/>
</dbReference>
<dbReference type="HOGENOM" id="CLU_000524_3_1_6"/>
<dbReference type="BioCyc" id="PHAL326442:PSHA_RS01100-MONOMER"/>
<dbReference type="Proteomes" id="UP000006843">
    <property type="component" value="Chromosome I"/>
</dbReference>
<dbReference type="GO" id="GO:0000428">
    <property type="term" value="C:DNA-directed RNA polymerase complex"/>
    <property type="evidence" value="ECO:0007669"/>
    <property type="project" value="UniProtKB-KW"/>
</dbReference>
<dbReference type="GO" id="GO:0003677">
    <property type="term" value="F:DNA binding"/>
    <property type="evidence" value="ECO:0007669"/>
    <property type="project" value="UniProtKB-UniRule"/>
</dbReference>
<dbReference type="GO" id="GO:0003899">
    <property type="term" value="F:DNA-directed RNA polymerase activity"/>
    <property type="evidence" value="ECO:0007669"/>
    <property type="project" value="UniProtKB-UniRule"/>
</dbReference>
<dbReference type="GO" id="GO:0000287">
    <property type="term" value="F:magnesium ion binding"/>
    <property type="evidence" value="ECO:0007669"/>
    <property type="project" value="UniProtKB-UniRule"/>
</dbReference>
<dbReference type="GO" id="GO:0008270">
    <property type="term" value="F:zinc ion binding"/>
    <property type="evidence" value="ECO:0007669"/>
    <property type="project" value="UniProtKB-UniRule"/>
</dbReference>
<dbReference type="GO" id="GO:0006351">
    <property type="term" value="P:DNA-templated transcription"/>
    <property type="evidence" value="ECO:0007669"/>
    <property type="project" value="UniProtKB-UniRule"/>
</dbReference>
<dbReference type="CDD" id="cd02655">
    <property type="entry name" value="RNAP_beta'_C"/>
    <property type="match status" value="1"/>
</dbReference>
<dbReference type="CDD" id="cd01609">
    <property type="entry name" value="RNAP_beta'_N"/>
    <property type="match status" value="1"/>
</dbReference>
<dbReference type="FunFam" id="1.10.132.30:FF:000003">
    <property type="entry name" value="DNA-directed RNA polymerase subunit beta"/>
    <property type="match status" value="1"/>
</dbReference>
<dbReference type="FunFam" id="1.10.150.390:FF:000002">
    <property type="entry name" value="DNA-directed RNA polymerase subunit beta"/>
    <property type="match status" value="1"/>
</dbReference>
<dbReference type="FunFam" id="1.10.40.90:FF:000001">
    <property type="entry name" value="DNA-directed RNA polymerase subunit beta"/>
    <property type="match status" value="1"/>
</dbReference>
<dbReference type="FunFam" id="4.10.860.120:FF:000001">
    <property type="entry name" value="DNA-directed RNA polymerase subunit beta"/>
    <property type="match status" value="1"/>
</dbReference>
<dbReference type="Gene3D" id="1.10.132.30">
    <property type="match status" value="1"/>
</dbReference>
<dbReference type="Gene3D" id="1.10.150.390">
    <property type="match status" value="1"/>
</dbReference>
<dbReference type="Gene3D" id="1.10.1790.20">
    <property type="match status" value="1"/>
</dbReference>
<dbReference type="Gene3D" id="1.10.40.90">
    <property type="match status" value="1"/>
</dbReference>
<dbReference type="Gene3D" id="2.40.40.20">
    <property type="match status" value="1"/>
</dbReference>
<dbReference type="Gene3D" id="2.40.50.100">
    <property type="match status" value="3"/>
</dbReference>
<dbReference type="Gene3D" id="4.10.860.120">
    <property type="entry name" value="RNA polymerase II, clamp domain"/>
    <property type="match status" value="1"/>
</dbReference>
<dbReference type="Gene3D" id="1.10.274.100">
    <property type="entry name" value="RNA polymerase Rpb1, domain 3"/>
    <property type="match status" value="1"/>
</dbReference>
<dbReference type="HAMAP" id="MF_01322">
    <property type="entry name" value="RNApol_bact_RpoC"/>
    <property type="match status" value="1"/>
</dbReference>
<dbReference type="InterPro" id="IPR045867">
    <property type="entry name" value="DNA-dir_RpoC_beta_prime"/>
</dbReference>
<dbReference type="InterPro" id="IPR012754">
    <property type="entry name" value="DNA-dir_RpoC_beta_prime_bact"/>
</dbReference>
<dbReference type="InterPro" id="IPR000722">
    <property type="entry name" value="RNA_pol_asu"/>
</dbReference>
<dbReference type="InterPro" id="IPR006592">
    <property type="entry name" value="RNA_pol_N"/>
</dbReference>
<dbReference type="InterPro" id="IPR007080">
    <property type="entry name" value="RNA_pol_Rpb1_1"/>
</dbReference>
<dbReference type="InterPro" id="IPR007066">
    <property type="entry name" value="RNA_pol_Rpb1_3"/>
</dbReference>
<dbReference type="InterPro" id="IPR042102">
    <property type="entry name" value="RNA_pol_Rpb1_3_sf"/>
</dbReference>
<dbReference type="InterPro" id="IPR007083">
    <property type="entry name" value="RNA_pol_Rpb1_4"/>
</dbReference>
<dbReference type="InterPro" id="IPR007081">
    <property type="entry name" value="RNA_pol_Rpb1_5"/>
</dbReference>
<dbReference type="InterPro" id="IPR044893">
    <property type="entry name" value="RNA_pol_Rpb1_clamp_domain"/>
</dbReference>
<dbReference type="InterPro" id="IPR038120">
    <property type="entry name" value="Rpb1_funnel_sf"/>
</dbReference>
<dbReference type="NCBIfam" id="TIGR02386">
    <property type="entry name" value="rpoC_TIGR"/>
    <property type="match status" value="1"/>
</dbReference>
<dbReference type="PANTHER" id="PTHR19376">
    <property type="entry name" value="DNA-DIRECTED RNA POLYMERASE"/>
    <property type="match status" value="1"/>
</dbReference>
<dbReference type="PANTHER" id="PTHR19376:SF54">
    <property type="entry name" value="DNA-DIRECTED RNA POLYMERASE SUBUNIT BETA"/>
    <property type="match status" value="1"/>
</dbReference>
<dbReference type="Pfam" id="PF04997">
    <property type="entry name" value="RNA_pol_Rpb1_1"/>
    <property type="match status" value="1"/>
</dbReference>
<dbReference type="Pfam" id="PF00623">
    <property type="entry name" value="RNA_pol_Rpb1_2"/>
    <property type="match status" value="2"/>
</dbReference>
<dbReference type="Pfam" id="PF04983">
    <property type="entry name" value="RNA_pol_Rpb1_3"/>
    <property type="match status" value="1"/>
</dbReference>
<dbReference type="Pfam" id="PF05000">
    <property type="entry name" value="RNA_pol_Rpb1_4"/>
    <property type="match status" value="1"/>
</dbReference>
<dbReference type="Pfam" id="PF04998">
    <property type="entry name" value="RNA_pol_Rpb1_5"/>
    <property type="match status" value="1"/>
</dbReference>
<dbReference type="SMART" id="SM00663">
    <property type="entry name" value="RPOLA_N"/>
    <property type="match status" value="1"/>
</dbReference>
<dbReference type="SUPFAM" id="SSF64484">
    <property type="entry name" value="beta and beta-prime subunits of DNA dependent RNA-polymerase"/>
    <property type="match status" value="1"/>
</dbReference>
<name>RPOC_PSET1</name>
<proteinExistence type="inferred from homology"/>
<feature type="chain" id="PRO_0000225564" description="DNA-directed RNA polymerase subunit beta'">
    <location>
        <begin position="1"/>
        <end position="1390"/>
    </location>
</feature>
<feature type="binding site" evidence="1">
    <location>
        <position position="70"/>
    </location>
    <ligand>
        <name>Zn(2+)</name>
        <dbReference type="ChEBI" id="CHEBI:29105"/>
        <label>1</label>
    </ligand>
</feature>
<feature type="binding site" evidence="1">
    <location>
        <position position="72"/>
    </location>
    <ligand>
        <name>Zn(2+)</name>
        <dbReference type="ChEBI" id="CHEBI:29105"/>
        <label>1</label>
    </ligand>
</feature>
<feature type="binding site" evidence="1">
    <location>
        <position position="85"/>
    </location>
    <ligand>
        <name>Zn(2+)</name>
        <dbReference type="ChEBI" id="CHEBI:29105"/>
        <label>1</label>
    </ligand>
</feature>
<feature type="binding site" evidence="1">
    <location>
        <position position="88"/>
    </location>
    <ligand>
        <name>Zn(2+)</name>
        <dbReference type="ChEBI" id="CHEBI:29105"/>
        <label>1</label>
    </ligand>
</feature>
<feature type="binding site" evidence="1">
    <location>
        <position position="460"/>
    </location>
    <ligand>
        <name>Mg(2+)</name>
        <dbReference type="ChEBI" id="CHEBI:18420"/>
    </ligand>
</feature>
<feature type="binding site" evidence="1">
    <location>
        <position position="462"/>
    </location>
    <ligand>
        <name>Mg(2+)</name>
        <dbReference type="ChEBI" id="CHEBI:18420"/>
    </ligand>
</feature>
<feature type="binding site" evidence="1">
    <location>
        <position position="464"/>
    </location>
    <ligand>
        <name>Mg(2+)</name>
        <dbReference type="ChEBI" id="CHEBI:18420"/>
    </ligand>
</feature>
<feature type="binding site" evidence="1">
    <location>
        <position position="814"/>
    </location>
    <ligand>
        <name>Zn(2+)</name>
        <dbReference type="ChEBI" id="CHEBI:29105"/>
        <label>2</label>
    </ligand>
</feature>
<feature type="binding site" evidence="1">
    <location>
        <position position="888"/>
    </location>
    <ligand>
        <name>Zn(2+)</name>
        <dbReference type="ChEBI" id="CHEBI:29105"/>
        <label>2</label>
    </ligand>
</feature>
<feature type="binding site" evidence="1">
    <location>
        <position position="895"/>
    </location>
    <ligand>
        <name>Zn(2+)</name>
        <dbReference type="ChEBI" id="CHEBI:29105"/>
        <label>2</label>
    </ligand>
</feature>
<feature type="binding site" evidence="1">
    <location>
        <position position="898"/>
    </location>
    <ligand>
        <name>Zn(2+)</name>
        <dbReference type="ChEBI" id="CHEBI:29105"/>
        <label>2</label>
    </ligand>
</feature>
<protein>
    <recommendedName>
        <fullName evidence="1">DNA-directed RNA polymerase subunit beta'</fullName>
        <shortName evidence="1">RNAP subunit beta'</shortName>
        <ecNumber evidence="1">2.7.7.6</ecNumber>
    </recommendedName>
    <alternativeName>
        <fullName evidence="1">RNA polymerase subunit beta'</fullName>
    </alternativeName>
    <alternativeName>
        <fullName evidence="1">Transcriptase subunit beta'</fullName>
    </alternativeName>
</protein>
<gene>
    <name evidence="1" type="primary">rpoC</name>
    <name type="ordered locus">PSHAa0223</name>
</gene>
<accession>Q3ILP8</accession>
<keyword id="KW-0240">DNA-directed RNA polymerase</keyword>
<keyword id="KW-0460">Magnesium</keyword>
<keyword id="KW-0479">Metal-binding</keyword>
<keyword id="KW-0548">Nucleotidyltransferase</keyword>
<keyword id="KW-1185">Reference proteome</keyword>
<keyword id="KW-0804">Transcription</keyword>
<keyword id="KW-0808">Transferase</keyword>
<keyword id="KW-0862">Zinc</keyword>
<comment type="function">
    <text evidence="1">DNA-dependent RNA polymerase catalyzes the transcription of DNA into RNA using the four ribonucleoside triphosphates as substrates.</text>
</comment>
<comment type="catalytic activity">
    <reaction evidence="1">
        <text>RNA(n) + a ribonucleoside 5'-triphosphate = RNA(n+1) + diphosphate</text>
        <dbReference type="Rhea" id="RHEA:21248"/>
        <dbReference type="Rhea" id="RHEA-COMP:14527"/>
        <dbReference type="Rhea" id="RHEA-COMP:17342"/>
        <dbReference type="ChEBI" id="CHEBI:33019"/>
        <dbReference type="ChEBI" id="CHEBI:61557"/>
        <dbReference type="ChEBI" id="CHEBI:140395"/>
        <dbReference type="EC" id="2.7.7.6"/>
    </reaction>
</comment>
<comment type="cofactor">
    <cofactor evidence="1">
        <name>Mg(2+)</name>
        <dbReference type="ChEBI" id="CHEBI:18420"/>
    </cofactor>
    <text evidence="1">Binds 1 Mg(2+) ion per subunit.</text>
</comment>
<comment type="cofactor">
    <cofactor evidence="1">
        <name>Zn(2+)</name>
        <dbReference type="ChEBI" id="CHEBI:29105"/>
    </cofactor>
    <text evidence="1">Binds 2 Zn(2+) ions per subunit.</text>
</comment>
<comment type="subunit">
    <text evidence="1">The RNAP catalytic core consists of 2 alpha, 1 beta, 1 beta' and 1 omega subunit. When a sigma factor is associated with the core the holoenzyme is formed, which can initiate transcription.</text>
</comment>
<comment type="similarity">
    <text evidence="1">Belongs to the RNA polymerase beta' chain family.</text>
</comment>
<organism>
    <name type="scientific">Pseudoalteromonas translucida (strain TAC 125)</name>
    <dbReference type="NCBI Taxonomy" id="326442"/>
    <lineage>
        <taxon>Bacteria</taxon>
        <taxon>Pseudomonadati</taxon>
        <taxon>Pseudomonadota</taxon>
        <taxon>Gammaproteobacteria</taxon>
        <taxon>Alteromonadales</taxon>
        <taxon>Pseudoalteromonadaceae</taxon>
        <taxon>Pseudoalteromonas</taxon>
    </lineage>
</organism>